<proteinExistence type="inferred from homology"/>
<dbReference type="EC" id="3.1.1.96" evidence="1"/>
<dbReference type="EMBL" id="CP000159">
    <property type="protein sequence ID" value="ABC45199.1"/>
    <property type="molecule type" value="Genomic_DNA"/>
</dbReference>
<dbReference type="RefSeq" id="WP_011403925.1">
    <property type="nucleotide sequence ID" value="NC_007677.1"/>
</dbReference>
<dbReference type="RefSeq" id="YP_445297.1">
    <property type="nucleotide sequence ID" value="NC_007677.1"/>
</dbReference>
<dbReference type="SMR" id="Q2S3D4"/>
<dbReference type="STRING" id="309807.SRU_1171"/>
<dbReference type="EnsemblBacteria" id="ABC45199">
    <property type="protein sequence ID" value="ABC45199"/>
    <property type="gene ID" value="SRU_1171"/>
</dbReference>
<dbReference type="GeneID" id="83728079"/>
<dbReference type="KEGG" id="sru:SRU_1171"/>
<dbReference type="PATRIC" id="fig|309807.25.peg.1214"/>
<dbReference type="eggNOG" id="COG1490">
    <property type="taxonomic scope" value="Bacteria"/>
</dbReference>
<dbReference type="HOGENOM" id="CLU_076901_1_0_10"/>
<dbReference type="OrthoDB" id="9801395at2"/>
<dbReference type="Proteomes" id="UP000008674">
    <property type="component" value="Chromosome"/>
</dbReference>
<dbReference type="GO" id="GO:0005737">
    <property type="term" value="C:cytoplasm"/>
    <property type="evidence" value="ECO:0007669"/>
    <property type="project" value="UniProtKB-SubCell"/>
</dbReference>
<dbReference type="GO" id="GO:0051500">
    <property type="term" value="F:D-tyrosyl-tRNA(Tyr) deacylase activity"/>
    <property type="evidence" value="ECO:0007669"/>
    <property type="project" value="TreeGrafter"/>
</dbReference>
<dbReference type="GO" id="GO:0106026">
    <property type="term" value="F:Gly-tRNA(Ala) deacylase activity"/>
    <property type="evidence" value="ECO:0007669"/>
    <property type="project" value="UniProtKB-UniRule"/>
</dbReference>
<dbReference type="GO" id="GO:0043908">
    <property type="term" value="F:Ser(Gly)-tRNA(Ala) hydrolase activity"/>
    <property type="evidence" value="ECO:0007669"/>
    <property type="project" value="UniProtKB-UniRule"/>
</dbReference>
<dbReference type="GO" id="GO:0000049">
    <property type="term" value="F:tRNA binding"/>
    <property type="evidence" value="ECO:0007669"/>
    <property type="project" value="UniProtKB-UniRule"/>
</dbReference>
<dbReference type="GO" id="GO:0019478">
    <property type="term" value="P:D-amino acid catabolic process"/>
    <property type="evidence" value="ECO:0007669"/>
    <property type="project" value="UniProtKB-UniRule"/>
</dbReference>
<dbReference type="FunFam" id="3.50.80.10:FF:000001">
    <property type="entry name" value="D-aminoacyl-tRNA deacylase"/>
    <property type="match status" value="1"/>
</dbReference>
<dbReference type="Gene3D" id="3.50.80.10">
    <property type="entry name" value="D-tyrosyl-tRNA(Tyr) deacylase"/>
    <property type="match status" value="1"/>
</dbReference>
<dbReference type="HAMAP" id="MF_00518">
    <property type="entry name" value="Deacylase_Dtd"/>
    <property type="match status" value="1"/>
</dbReference>
<dbReference type="InterPro" id="IPR003732">
    <property type="entry name" value="Daa-tRNA_deacyls_DTD"/>
</dbReference>
<dbReference type="InterPro" id="IPR023509">
    <property type="entry name" value="DTD-like_sf"/>
</dbReference>
<dbReference type="NCBIfam" id="TIGR00256">
    <property type="entry name" value="D-aminoacyl-tRNA deacylase"/>
    <property type="match status" value="1"/>
</dbReference>
<dbReference type="PANTHER" id="PTHR10472:SF5">
    <property type="entry name" value="D-AMINOACYL-TRNA DEACYLASE 1"/>
    <property type="match status" value="1"/>
</dbReference>
<dbReference type="PANTHER" id="PTHR10472">
    <property type="entry name" value="D-TYROSYL-TRNA TYR DEACYLASE"/>
    <property type="match status" value="1"/>
</dbReference>
<dbReference type="Pfam" id="PF02580">
    <property type="entry name" value="Tyr_Deacylase"/>
    <property type="match status" value="1"/>
</dbReference>
<dbReference type="SUPFAM" id="SSF69500">
    <property type="entry name" value="DTD-like"/>
    <property type="match status" value="1"/>
</dbReference>
<gene>
    <name evidence="1" type="primary">dtd</name>
    <name type="ordered locus">SRU_1171</name>
</gene>
<organism>
    <name type="scientific">Salinibacter ruber (strain DSM 13855 / M31)</name>
    <dbReference type="NCBI Taxonomy" id="309807"/>
    <lineage>
        <taxon>Bacteria</taxon>
        <taxon>Pseudomonadati</taxon>
        <taxon>Rhodothermota</taxon>
        <taxon>Rhodothermia</taxon>
        <taxon>Rhodothermales</taxon>
        <taxon>Salinibacteraceae</taxon>
        <taxon>Salinibacter</taxon>
    </lineage>
</organism>
<protein>
    <recommendedName>
        <fullName evidence="1">D-aminoacyl-tRNA deacylase</fullName>
        <shortName evidence="1">DTD</shortName>
        <ecNumber evidence="1">3.1.1.96</ecNumber>
    </recommendedName>
    <alternativeName>
        <fullName evidence="1">Gly-tRNA(Ala) deacylase</fullName>
    </alternativeName>
</protein>
<feature type="chain" id="PRO_0000259309" description="D-aminoacyl-tRNA deacylase">
    <location>
        <begin position="1"/>
        <end position="150"/>
    </location>
</feature>
<feature type="short sequence motif" description="Gly-cisPro motif, important for rejection of L-amino acids" evidence="1">
    <location>
        <begin position="138"/>
        <end position="139"/>
    </location>
</feature>
<evidence type="ECO:0000255" key="1">
    <source>
        <dbReference type="HAMAP-Rule" id="MF_00518"/>
    </source>
</evidence>
<reference key="1">
    <citation type="journal article" date="2005" name="Proc. Natl. Acad. Sci. U.S.A.">
        <title>The genome of Salinibacter ruber: convergence and gene exchange among hyperhalophilic bacteria and archaea.</title>
        <authorList>
            <person name="Mongodin E.F."/>
            <person name="Nelson K.E."/>
            <person name="Daugherty S."/>
            <person name="DeBoy R.T."/>
            <person name="Wister J."/>
            <person name="Khouri H."/>
            <person name="Weidman J."/>
            <person name="Walsh D.A."/>
            <person name="Papke R.T."/>
            <person name="Sanchez Perez G."/>
            <person name="Sharma A.K."/>
            <person name="Nesbo C.L."/>
            <person name="MacLeod D."/>
            <person name="Bapteste E."/>
            <person name="Doolittle W.F."/>
            <person name="Charlebois R.L."/>
            <person name="Legault B."/>
            <person name="Rodriguez-Valera F."/>
        </authorList>
    </citation>
    <scope>NUCLEOTIDE SEQUENCE [LARGE SCALE GENOMIC DNA]</scope>
    <source>
        <strain>DSM 13855 / CECT 5946 / M31</strain>
    </source>
</reference>
<sequence>MVALVQRVSEAAVEIDGAPVGAIEHGLLILLGVHEDDTRTESAWCAEKCARLRVFPDADGKMDESLLDTGGDALVVPQFTLYGDTSVGNRPSFTEAAPPDRADRLYEHFVRELEGHLGQDVPTGEFGAMMDVRLTNDGPVTLWVERRADE</sequence>
<comment type="function">
    <text evidence="1">An aminoacyl-tRNA editing enzyme that deacylates mischarged D-aminoacyl-tRNAs. Also deacylates mischarged glycyl-tRNA(Ala), protecting cells against glycine mischarging by AlaRS. Acts via tRNA-based rather than protein-based catalysis; rejects L-amino acids rather than detecting D-amino acids in the active site. By recycling D-aminoacyl-tRNA to D-amino acids and free tRNA molecules, this enzyme counteracts the toxicity associated with the formation of D-aminoacyl-tRNA entities in vivo and helps enforce protein L-homochirality.</text>
</comment>
<comment type="catalytic activity">
    <reaction evidence="1">
        <text>glycyl-tRNA(Ala) + H2O = tRNA(Ala) + glycine + H(+)</text>
        <dbReference type="Rhea" id="RHEA:53744"/>
        <dbReference type="Rhea" id="RHEA-COMP:9657"/>
        <dbReference type="Rhea" id="RHEA-COMP:13640"/>
        <dbReference type="ChEBI" id="CHEBI:15377"/>
        <dbReference type="ChEBI" id="CHEBI:15378"/>
        <dbReference type="ChEBI" id="CHEBI:57305"/>
        <dbReference type="ChEBI" id="CHEBI:78442"/>
        <dbReference type="ChEBI" id="CHEBI:78522"/>
        <dbReference type="EC" id="3.1.1.96"/>
    </reaction>
</comment>
<comment type="catalytic activity">
    <reaction evidence="1">
        <text>a D-aminoacyl-tRNA + H2O = a tRNA + a D-alpha-amino acid + H(+)</text>
        <dbReference type="Rhea" id="RHEA:13953"/>
        <dbReference type="Rhea" id="RHEA-COMP:10123"/>
        <dbReference type="Rhea" id="RHEA-COMP:10124"/>
        <dbReference type="ChEBI" id="CHEBI:15377"/>
        <dbReference type="ChEBI" id="CHEBI:15378"/>
        <dbReference type="ChEBI" id="CHEBI:59871"/>
        <dbReference type="ChEBI" id="CHEBI:78442"/>
        <dbReference type="ChEBI" id="CHEBI:79333"/>
        <dbReference type="EC" id="3.1.1.96"/>
    </reaction>
</comment>
<comment type="subunit">
    <text evidence="1">Homodimer.</text>
</comment>
<comment type="subcellular location">
    <subcellularLocation>
        <location evidence="1">Cytoplasm</location>
    </subcellularLocation>
</comment>
<comment type="domain">
    <text evidence="1">A Gly-cisPro motif from one monomer fits into the active site of the other monomer to allow specific chiral rejection of L-amino acids.</text>
</comment>
<comment type="similarity">
    <text evidence="1">Belongs to the DTD family.</text>
</comment>
<keyword id="KW-0963">Cytoplasm</keyword>
<keyword id="KW-0378">Hydrolase</keyword>
<keyword id="KW-1185">Reference proteome</keyword>
<keyword id="KW-0694">RNA-binding</keyword>
<keyword id="KW-0820">tRNA-binding</keyword>
<name>DTD_SALRD</name>
<accession>Q2S3D4</accession>